<name>CH10_STROR</name>
<keyword id="KW-0143">Chaperone</keyword>
<keyword id="KW-0963">Cytoplasm</keyword>
<proteinExistence type="inferred from homology"/>
<accession>Q8KIY4</accession>
<protein>
    <recommendedName>
        <fullName evidence="1">Co-chaperonin GroES</fullName>
    </recommendedName>
    <alternativeName>
        <fullName evidence="1">10 kDa chaperonin</fullName>
    </alternativeName>
    <alternativeName>
        <fullName evidence="1">Chaperonin-10</fullName>
        <shortName evidence="1">Cpn10</shortName>
    </alternativeName>
</protein>
<reference key="1">
    <citation type="submission" date="2001-06" db="EMBL/GenBank/DDBJ databases">
        <title>groESL sequences in Streptococcus oralis.</title>
        <authorList>
            <person name="Teng L.-J."/>
        </authorList>
    </citation>
    <scope>NUCLEOTIDE SEQUENCE [GENOMIC DNA]</scope>
    <source>
        <strain>ATCC 35037 / CIP 102922 / DSM 20627 / KCTC 13048 / LMG 14532 / NCTC 11427 / PB182</strain>
    </source>
</reference>
<organism>
    <name type="scientific">Streptococcus oralis</name>
    <dbReference type="NCBI Taxonomy" id="1303"/>
    <lineage>
        <taxon>Bacteria</taxon>
        <taxon>Bacillati</taxon>
        <taxon>Bacillota</taxon>
        <taxon>Bacilli</taxon>
        <taxon>Lactobacillales</taxon>
        <taxon>Streptococcaceae</taxon>
        <taxon>Streptococcus</taxon>
    </lineage>
</organism>
<evidence type="ECO:0000255" key="1">
    <source>
        <dbReference type="HAMAP-Rule" id="MF_00580"/>
    </source>
</evidence>
<feature type="chain" id="PRO_0000174865" description="Co-chaperonin GroES">
    <location>
        <begin position="1"/>
        <end position="94"/>
    </location>
</feature>
<comment type="function">
    <text evidence="1">Together with the chaperonin GroEL, plays an essential role in assisting protein folding. The GroEL-GroES system forms a nano-cage that allows encapsulation of the non-native substrate proteins and provides a physical environment optimized to promote and accelerate protein folding. GroES binds to the apical surface of the GroEL ring, thereby capping the opening of the GroEL channel.</text>
</comment>
<comment type="subunit">
    <text evidence="1">Heptamer of 7 subunits arranged in a ring. Interacts with the chaperonin GroEL.</text>
</comment>
<comment type="subcellular location">
    <subcellularLocation>
        <location evidence="1">Cytoplasm</location>
    </subcellularLocation>
</comment>
<comment type="similarity">
    <text evidence="1">Belongs to the GroES chaperonin family.</text>
</comment>
<gene>
    <name evidence="1" type="primary">groES</name>
    <name evidence="1" type="synonym">groS</name>
</gene>
<dbReference type="EMBL" id="AY038047">
    <property type="protein sequence ID" value="AAK71885.1"/>
    <property type="molecule type" value="Genomic_DNA"/>
</dbReference>
<dbReference type="RefSeq" id="WP_000917326.1">
    <property type="nucleotide sequence ID" value="NZ_VOXA01000054.1"/>
</dbReference>
<dbReference type="SMR" id="Q8KIY4"/>
<dbReference type="STRING" id="1303.SORDD17_01664"/>
<dbReference type="GeneID" id="49600348"/>
<dbReference type="GO" id="GO:0005737">
    <property type="term" value="C:cytoplasm"/>
    <property type="evidence" value="ECO:0007669"/>
    <property type="project" value="UniProtKB-SubCell"/>
</dbReference>
<dbReference type="GO" id="GO:0005524">
    <property type="term" value="F:ATP binding"/>
    <property type="evidence" value="ECO:0007669"/>
    <property type="project" value="InterPro"/>
</dbReference>
<dbReference type="GO" id="GO:0046872">
    <property type="term" value="F:metal ion binding"/>
    <property type="evidence" value="ECO:0007669"/>
    <property type="project" value="TreeGrafter"/>
</dbReference>
<dbReference type="GO" id="GO:0044183">
    <property type="term" value="F:protein folding chaperone"/>
    <property type="evidence" value="ECO:0007669"/>
    <property type="project" value="InterPro"/>
</dbReference>
<dbReference type="GO" id="GO:0051087">
    <property type="term" value="F:protein-folding chaperone binding"/>
    <property type="evidence" value="ECO:0007669"/>
    <property type="project" value="TreeGrafter"/>
</dbReference>
<dbReference type="GO" id="GO:0051082">
    <property type="term" value="F:unfolded protein binding"/>
    <property type="evidence" value="ECO:0007669"/>
    <property type="project" value="TreeGrafter"/>
</dbReference>
<dbReference type="GO" id="GO:0051085">
    <property type="term" value="P:chaperone cofactor-dependent protein refolding"/>
    <property type="evidence" value="ECO:0007669"/>
    <property type="project" value="TreeGrafter"/>
</dbReference>
<dbReference type="CDD" id="cd00320">
    <property type="entry name" value="cpn10"/>
    <property type="match status" value="1"/>
</dbReference>
<dbReference type="FunFam" id="2.30.33.40:FF:000007">
    <property type="entry name" value="10 kDa chaperonin"/>
    <property type="match status" value="1"/>
</dbReference>
<dbReference type="Gene3D" id="2.30.33.40">
    <property type="entry name" value="GroES chaperonin"/>
    <property type="match status" value="1"/>
</dbReference>
<dbReference type="HAMAP" id="MF_00580">
    <property type="entry name" value="CH10"/>
    <property type="match status" value="1"/>
</dbReference>
<dbReference type="InterPro" id="IPR020818">
    <property type="entry name" value="Chaperonin_GroES"/>
</dbReference>
<dbReference type="InterPro" id="IPR037124">
    <property type="entry name" value="Chaperonin_GroES_sf"/>
</dbReference>
<dbReference type="InterPro" id="IPR018369">
    <property type="entry name" value="Chaprnonin_Cpn10_CS"/>
</dbReference>
<dbReference type="InterPro" id="IPR011032">
    <property type="entry name" value="GroES-like_sf"/>
</dbReference>
<dbReference type="NCBIfam" id="NF001528">
    <property type="entry name" value="PRK00364.1-4"/>
    <property type="match status" value="1"/>
</dbReference>
<dbReference type="PANTHER" id="PTHR10772">
    <property type="entry name" value="10 KDA HEAT SHOCK PROTEIN"/>
    <property type="match status" value="1"/>
</dbReference>
<dbReference type="PANTHER" id="PTHR10772:SF58">
    <property type="entry name" value="CO-CHAPERONIN GROES"/>
    <property type="match status" value="1"/>
</dbReference>
<dbReference type="Pfam" id="PF00166">
    <property type="entry name" value="Cpn10"/>
    <property type="match status" value="1"/>
</dbReference>
<dbReference type="PRINTS" id="PR00297">
    <property type="entry name" value="CHAPERONIN10"/>
</dbReference>
<dbReference type="SMART" id="SM00883">
    <property type="entry name" value="Cpn10"/>
    <property type="match status" value="1"/>
</dbReference>
<dbReference type="SUPFAM" id="SSF50129">
    <property type="entry name" value="GroES-like"/>
    <property type="match status" value="1"/>
</dbReference>
<dbReference type="PROSITE" id="PS00681">
    <property type="entry name" value="CHAPERONINS_CPN10"/>
    <property type="match status" value="1"/>
</dbReference>
<sequence length="94" mass="9908">MLKPLGDRVVLKIEEKEQTVGGFVLAGSAQEKTKTAQVVATGQGVRTLNGDLVAPSVKPGDRVLVEAHAGIDVKDGDEKYIIVGEANILAIIEE</sequence>